<gene>
    <name evidence="1" type="primary">pepA</name>
    <name type="ordered locus">Mfla_0222</name>
</gene>
<sequence length="496" mass="53197">MEFSIKSGTPEKQRKDCVVVGVFEARKFSDAAAVLDRASQGYLGDILRTGDIDGKPGSTLLLHSVPGVAAGRVLLVGLGKERELDEHSYRKALRAAIKALHTLDDADVAICLAEVPVKKRDTAWRVAQVVEIAEDSTYRFDRFKSKPANGKKGIAKLQVHVTRRSDVAEGEKGLRQGKALAAGVSFAKDLGNLAPNYCTPSYLAEQAEALSDSHGLQVEVLEKEDIEKLGMGSFLGVTKGSVQPPKLIVLQHRKGKKSQKPVVLVGKGITFDTGGISLKPGADMDEMKYDMCGAASVLGTFKAIAELDLPLNVVGIIPTCENMPDGNATRPGDVLTSMSGQTIEVLNTDAEGRLILCDALTYAERFEPQAVVDVATLTGACVIALGHHASGLFSNKDSLAEELLDAGNEAYDRAWRLPLWDDYQSQLDSNFADMANIGGRAGGSITAACFLSRFAKKYDWAHLDIAGTAWKSGKEKGATGRPVPLLTEFLKQRAGK</sequence>
<feature type="chain" id="PRO_1000019935" description="Probable cytosol aminopeptidase">
    <location>
        <begin position="1"/>
        <end position="496"/>
    </location>
</feature>
<feature type="active site" evidence="1">
    <location>
        <position position="279"/>
    </location>
</feature>
<feature type="active site" evidence="1">
    <location>
        <position position="353"/>
    </location>
</feature>
<feature type="binding site" evidence="1">
    <location>
        <position position="267"/>
    </location>
    <ligand>
        <name>Mn(2+)</name>
        <dbReference type="ChEBI" id="CHEBI:29035"/>
        <label>2</label>
    </ligand>
</feature>
<feature type="binding site" evidence="1">
    <location>
        <position position="272"/>
    </location>
    <ligand>
        <name>Mn(2+)</name>
        <dbReference type="ChEBI" id="CHEBI:29035"/>
        <label>1</label>
    </ligand>
</feature>
<feature type="binding site" evidence="1">
    <location>
        <position position="272"/>
    </location>
    <ligand>
        <name>Mn(2+)</name>
        <dbReference type="ChEBI" id="CHEBI:29035"/>
        <label>2</label>
    </ligand>
</feature>
<feature type="binding site" evidence="1">
    <location>
        <position position="290"/>
    </location>
    <ligand>
        <name>Mn(2+)</name>
        <dbReference type="ChEBI" id="CHEBI:29035"/>
        <label>2</label>
    </ligand>
</feature>
<feature type="binding site" evidence="1">
    <location>
        <position position="349"/>
    </location>
    <ligand>
        <name>Mn(2+)</name>
        <dbReference type="ChEBI" id="CHEBI:29035"/>
        <label>1</label>
    </ligand>
</feature>
<feature type="binding site" evidence="1">
    <location>
        <position position="351"/>
    </location>
    <ligand>
        <name>Mn(2+)</name>
        <dbReference type="ChEBI" id="CHEBI:29035"/>
        <label>1</label>
    </ligand>
</feature>
<feature type="binding site" evidence="1">
    <location>
        <position position="351"/>
    </location>
    <ligand>
        <name>Mn(2+)</name>
        <dbReference type="ChEBI" id="CHEBI:29035"/>
        <label>2</label>
    </ligand>
</feature>
<proteinExistence type="inferred from homology"/>
<keyword id="KW-0031">Aminopeptidase</keyword>
<keyword id="KW-0963">Cytoplasm</keyword>
<keyword id="KW-0378">Hydrolase</keyword>
<keyword id="KW-0464">Manganese</keyword>
<keyword id="KW-0479">Metal-binding</keyword>
<keyword id="KW-0645">Protease</keyword>
<keyword id="KW-1185">Reference proteome</keyword>
<reference key="1">
    <citation type="submission" date="2006-03" db="EMBL/GenBank/DDBJ databases">
        <title>Complete sequence of Methylobacillus flagellatus KT.</title>
        <authorList>
            <consortium name="US DOE Joint Genome Institute"/>
            <person name="Copeland A."/>
            <person name="Lucas S."/>
            <person name="Lapidus A."/>
            <person name="Barry K."/>
            <person name="Detter J.C."/>
            <person name="Glavina del Rio T."/>
            <person name="Hammon N."/>
            <person name="Israni S."/>
            <person name="Dalin E."/>
            <person name="Tice H."/>
            <person name="Pitluck S."/>
            <person name="Brettin T."/>
            <person name="Bruce D."/>
            <person name="Han C."/>
            <person name="Tapia R."/>
            <person name="Saunders E."/>
            <person name="Gilna P."/>
            <person name="Schmutz J."/>
            <person name="Larimer F."/>
            <person name="Land M."/>
            <person name="Kyrpides N."/>
            <person name="Anderson I."/>
            <person name="Richardson P."/>
        </authorList>
    </citation>
    <scope>NUCLEOTIDE SEQUENCE [LARGE SCALE GENOMIC DNA]</scope>
    <source>
        <strain>ATCC 51484 / DSM 6875 / VKM B-1610 / KT</strain>
    </source>
</reference>
<organism>
    <name type="scientific">Methylobacillus flagellatus (strain ATCC 51484 / DSM 6875 / VKM B-1610 / KT)</name>
    <dbReference type="NCBI Taxonomy" id="265072"/>
    <lineage>
        <taxon>Bacteria</taxon>
        <taxon>Pseudomonadati</taxon>
        <taxon>Pseudomonadota</taxon>
        <taxon>Betaproteobacteria</taxon>
        <taxon>Nitrosomonadales</taxon>
        <taxon>Methylophilaceae</taxon>
        <taxon>Methylobacillus</taxon>
    </lineage>
</organism>
<accession>Q1H4U4</accession>
<comment type="function">
    <text evidence="1">Presumably involved in the processing and regular turnover of intracellular proteins. Catalyzes the removal of unsubstituted N-terminal amino acids from various peptides.</text>
</comment>
<comment type="catalytic activity">
    <reaction evidence="1">
        <text>Release of an N-terminal amino acid, Xaa-|-Yaa-, in which Xaa is preferably Leu, but may be other amino acids including Pro although not Arg or Lys, and Yaa may be Pro. Amino acid amides and methyl esters are also readily hydrolyzed, but rates on arylamides are exceedingly low.</text>
        <dbReference type="EC" id="3.4.11.1"/>
    </reaction>
</comment>
<comment type="catalytic activity">
    <reaction evidence="1">
        <text>Release of an N-terminal amino acid, preferentially leucine, but not glutamic or aspartic acids.</text>
        <dbReference type="EC" id="3.4.11.10"/>
    </reaction>
</comment>
<comment type="cofactor">
    <cofactor evidence="1">
        <name>Mn(2+)</name>
        <dbReference type="ChEBI" id="CHEBI:29035"/>
    </cofactor>
    <text evidence="1">Binds 2 manganese ions per subunit.</text>
</comment>
<comment type="subcellular location">
    <subcellularLocation>
        <location evidence="1">Cytoplasm</location>
    </subcellularLocation>
</comment>
<comment type="similarity">
    <text evidence="1">Belongs to the peptidase M17 family.</text>
</comment>
<dbReference type="EC" id="3.4.11.1" evidence="1"/>
<dbReference type="EC" id="3.4.11.10" evidence="1"/>
<dbReference type="EMBL" id="CP000284">
    <property type="protein sequence ID" value="ABE48493.1"/>
    <property type="molecule type" value="Genomic_DNA"/>
</dbReference>
<dbReference type="RefSeq" id="WP_011478590.1">
    <property type="nucleotide sequence ID" value="NC_007947.1"/>
</dbReference>
<dbReference type="SMR" id="Q1H4U4"/>
<dbReference type="STRING" id="265072.Mfla_0222"/>
<dbReference type="MEROPS" id="M17.003"/>
<dbReference type="KEGG" id="mfa:Mfla_0222"/>
<dbReference type="eggNOG" id="COG0260">
    <property type="taxonomic scope" value="Bacteria"/>
</dbReference>
<dbReference type="HOGENOM" id="CLU_013734_0_1_4"/>
<dbReference type="OrthoDB" id="9809354at2"/>
<dbReference type="Proteomes" id="UP000002440">
    <property type="component" value="Chromosome"/>
</dbReference>
<dbReference type="GO" id="GO:0005737">
    <property type="term" value="C:cytoplasm"/>
    <property type="evidence" value="ECO:0007669"/>
    <property type="project" value="UniProtKB-SubCell"/>
</dbReference>
<dbReference type="GO" id="GO:0030145">
    <property type="term" value="F:manganese ion binding"/>
    <property type="evidence" value="ECO:0007669"/>
    <property type="project" value="UniProtKB-UniRule"/>
</dbReference>
<dbReference type="GO" id="GO:0070006">
    <property type="term" value="F:metalloaminopeptidase activity"/>
    <property type="evidence" value="ECO:0007669"/>
    <property type="project" value="InterPro"/>
</dbReference>
<dbReference type="GO" id="GO:0006508">
    <property type="term" value="P:proteolysis"/>
    <property type="evidence" value="ECO:0007669"/>
    <property type="project" value="UniProtKB-KW"/>
</dbReference>
<dbReference type="CDD" id="cd00433">
    <property type="entry name" value="Peptidase_M17"/>
    <property type="match status" value="1"/>
</dbReference>
<dbReference type="FunFam" id="3.40.630.10:FF:000004">
    <property type="entry name" value="Probable cytosol aminopeptidase"/>
    <property type="match status" value="1"/>
</dbReference>
<dbReference type="Gene3D" id="3.40.220.10">
    <property type="entry name" value="Leucine Aminopeptidase, subunit E, domain 1"/>
    <property type="match status" value="1"/>
</dbReference>
<dbReference type="Gene3D" id="3.40.630.10">
    <property type="entry name" value="Zn peptidases"/>
    <property type="match status" value="1"/>
</dbReference>
<dbReference type="HAMAP" id="MF_00181">
    <property type="entry name" value="Cytosol_peptidase_M17"/>
    <property type="match status" value="1"/>
</dbReference>
<dbReference type="InterPro" id="IPR011356">
    <property type="entry name" value="Leucine_aapep/pepB"/>
</dbReference>
<dbReference type="InterPro" id="IPR043472">
    <property type="entry name" value="Macro_dom-like"/>
</dbReference>
<dbReference type="InterPro" id="IPR000819">
    <property type="entry name" value="Peptidase_M17_C"/>
</dbReference>
<dbReference type="InterPro" id="IPR023042">
    <property type="entry name" value="Peptidase_M17_leu_NH2_pept"/>
</dbReference>
<dbReference type="InterPro" id="IPR008283">
    <property type="entry name" value="Peptidase_M17_N"/>
</dbReference>
<dbReference type="NCBIfam" id="NF002073">
    <property type="entry name" value="PRK00913.1-2"/>
    <property type="match status" value="1"/>
</dbReference>
<dbReference type="NCBIfam" id="NF002074">
    <property type="entry name" value="PRK00913.1-4"/>
    <property type="match status" value="1"/>
</dbReference>
<dbReference type="NCBIfam" id="NF002077">
    <property type="entry name" value="PRK00913.2-4"/>
    <property type="match status" value="1"/>
</dbReference>
<dbReference type="NCBIfam" id="NF002083">
    <property type="entry name" value="PRK00913.3-5"/>
    <property type="match status" value="1"/>
</dbReference>
<dbReference type="PANTHER" id="PTHR11963:SF23">
    <property type="entry name" value="CYTOSOL AMINOPEPTIDASE"/>
    <property type="match status" value="1"/>
</dbReference>
<dbReference type="PANTHER" id="PTHR11963">
    <property type="entry name" value="LEUCINE AMINOPEPTIDASE-RELATED"/>
    <property type="match status" value="1"/>
</dbReference>
<dbReference type="Pfam" id="PF00883">
    <property type="entry name" value="Peptidase_M17"/>
    <property type="match status" value="1"/>
</dbReference>
<dbReference type="Pfam" id="PF02789">
    <property type="entry name" value="Peptidase_M17_N"/>
    <property type="match status" value="1"/>
</dbReference>
<dbReference type="PRINTS" id="PR00481">
    <property type="entry name" value="LAMNOPPTDASE"/>
</dbReference>
<dbReference type="SUPFAM" id="SSF52949">
    <property type="entry name" value="Macro domain-like"/>
    <property type="match status" value="1"/>
</dbReference>
<dbReference type="SUPFAM" id="SSF53187">
    <property type="entry name" value="Zn-dependent exopeptidases"/>
    <property type="match status" value="1"/>
</dbReference>
<dbReference type="PROSITE" id="PS00631">
    <property type="entry name" value="CYTOSOL_AP"/>
    <property type="match status" value="1"/>
</dbReference>
<name>AMPA_METFK</name>
<evidence type="ECO:0000255" key="1">
    <source>
        <dbReference type="HAMAP-Rule" id="MF_00181"/>
    </source>
</evidence>
<protein>
    <recommendedName>
        <fullName evidence="1">Probable cytosol aminopeptidase</fullName>
        <ecNumber evidence="1">3.4.11.1</ecNumber>
    </recommendedName>
    <alternativeName>
        <fullName evidence="1">Leucine aminopeptidase</fullName>
        <shortName evidence="1">LAP</shortName>
        <ecNumber evidence="1">3.4.11.10</ecNumber>
    </alternativeName>
    <alternativeName>
        <fullName evidence="1">Leucyl aminopeptidase</fullName>
    </alternativeName>
</protein>